<sequence>MTVIYQTTITRIGASAIDALSDQMLITFREGAPADLEEYCFIHCHGELKGALHPGLQFSLGQHRYPVTAVGSVAEDNLRELGHVTLRFDGLNEAEFPGTVHVAGPVPDDIAPGSVLKFESVKE</sequence>
<keyword id="KW-0963">Cytoplasm</keyword>
<keyword id="KW-0418">Kinase</keyword>
<keyword id="KW-0597">Phosphoprotein</keyword>
<keyword id="KW-0598">Phosphotransferase system</keyword>
<keyword id="KW-1185">Reference proteome</keyword>
<keyword id="KW-0762">Sugar transport</keyword>
<keyword id="KW-0808">Transferase</keyword>
<keyword id="KW-0813">Transport</keyword>
<comment type="function">
    <text evidence="2">The phosphoenolpyruvate-dependent sugar phosphotransferase system (sugar PTS), a major carbohydrate active transport system, catalyzes the phosphorylation of incoming sugar substrates concomitantly with their translocation across the cell membrane. The enzyme II complex composed of SrlA, SrlB and SrlE is involved in glucitol/sorbitol transport. It can also use D-mannitol.</text>
</comment>
<comment type="subcellular location">
    <subcellularLocation>
        <location evidence="6">Cytoplasm</location>
    </subcellularLocation>
</comment>
<comment type="induction">
    <text evidence="3">Regulated by an unusual system which consists of the activator GutM and the repressor GutR in addition to the cAMP-CRP complex.</text>
</comment>
<comment type="domain">
    <text evidence="1">The EIIA domain is phosphorylated by phospho-HPr on a histidyl residue. Then, it transfers the phosphoryl group to the EIIB domain.</text>
</comment>
<feature type="chain" id="PRO_0000186568" description="PTS system glucitol/sorbitol-specific EIIA component">
    <location>
        <begin position="1"/>
        <end position="123"/>
    </location>
</feature>
<feature type="domain" description="PTS EIIA type-5" evidence="1">
    <location>
        <begin position="3"/>
        <end position="116"/>
    </location>
</feature>
<feature type="active site" description="Tele-phosphohistidine intermediate" evidence="5">
    <location>
        <position position="43"/>
    </location>
</feature>
<feature type="modified residue" description="Phosphohistidine; by HPr" evidence="1">
    <location>
        <position position="43"/>
    </location>
</feature>
<feature type="sequence variant" description="In strain: ECOR 6, ECOR 28, ECOR 35, ECOR 37, ECOR 51, ECOR 58, ECOR 61, ECOR 66 and ECOR 69.">
    <original>I</original>
    <variation>T</variation>
    <location>
        <position position="17"/>
    </location>
</feature>
<feature type="sequence variant" description="In strain: ECOR 58.">
    <original>A</original>
    <variation>E</variation>
    <location>
        <position position="51"/>
    </location>
</feature>
<feature type="sequence variant" description="In strain: ECOR 28, ECOR 37, ECOR 58 and ECOR 69.">
    <original>S</original>
    <variation>T</variation>
    <location>
        <position position="59"/>
    </location>
</feature>
<feature type="sequence variant" description="In strain: ECOR 51.">
    <original>Q</original>
    <variation>R</variation>
    <location>
        <position position="62"/>
    </location>
</feature>
<feature type="sequence variant" description="In strain: ECOR 51, ECOR 61 and ECOR 66.">
    <original>N</original>
    <variation>S</variation>
    <location>
        <position position="92"/>
    </location>
</feature>
<feature type="sequence conflict" description="In Ref. 3." evidence="5" ref="3">
    <original>K</original>
    <variation>T</variation>
    <location>
        <position position="122"/>
    </location>
</feature>
<proteinExistence type="evidence at protein level"/>
<gene>
    <name type="primary">srlB</name>
    <name evidence="4" type="synonym">gutB</name>
    <name type="ordered locus">b2704</name>
    <name type="ordered locus">JW2673</name>
</gene>
<organism>
    <name type="scientific">Escherichia coli (strain K12)</name>
    <dbReference type="NCBI Taxonomy" id="83333"/>
    <lineage>
        <taxon>Bacteria</taxon>
        <taxon>Pseudomonadati</taxon>
        <taxon>Pseudomonadota</taxon>
        <taxon>Gammaproteobacteria</taxon>
        <taxon>Enterobacterales</taxon>
        <taxon>Enterobacteriaceae</taxon>
        <taxon>Escherichia</taxon>
    </lineage>
</organism>
<accession>P05706</accession>
<accession>P77029</accession>
<accession>Q47243</accession>
<accession>Q47244</accession>
<accession>Q57043</accession>
<accession>Q57084</accession>
<accession>Q57246</accession>
<evidence type="ECO:0000255" key="1">
    <source>
        <dbReference type="PROSITE-ProRule" id="PRU00420"/>
    </source>
</evidence>
<evidence type="ECO:0000269" key="2">
    <source>
    </source>
</evidence>
<evidence type="ECO:0000269" key="3">
    <source>
    </source>
</evidence>
<evidence type="ECO:0000303" key="4">
    <source>
    </source>
</evidence>
<evidence type="ECO:0000305" key="5"/>
<evidence type="ECO:0000305" key="6">
    <source>
    </source>
</evidence>
<name>PTHA_ECOLI</name>
<dbReference type="EMBL" id="J02708">
    <property type="protein sequence ID" value="AAC13412.1"/>
    <property type="molecule type" value="Genomic_DNA"/>
</dbReference>
<dbReference type="EMBL" id="M93583">
    <property type="protein sequence ID" value="AAA23937.1"/>
    <property type="molecule type" value="Genomic_DNA"/>
</dbReference>
<dbReference type="EMBL" id="M93585">
    <property type="protein sequence ID" value="AAA23939.1"/>
    <property type="molecule type" value="Genomic_DNA"/>
</dbReference>
<dbReference type="EMBL" id="M93586">
    <property type="protein sequence ID" value="AAA23946.1"/>
    <property type="molecule type" value="Genomic_DNA"/>
</dbReference>
<dbReference type="EMBL" id="M93588">
    <property type="protein sequence ID" value="AAA23942.1"/>
    <property type="molecule type" value="Genomic_DNA"/>
</dbReference>
<dbReference type="EMBL" id="M93589">
    <property type="protein sequence ID" value="AAA23938.1"/>
    <property type="molecule type" value="Genomic_DNA"/>
</dbReference>
<dbReference type="EMBL" id="M93590">
    <property type="protein sequence ID" value="AAA23940.1"/>
    <property type="molecule type" value="Genomic_DNA"/>
</dbReference>
<dbReference type="EMBL" id="M93599">
    <property type="protein sequence ID" value="AAA23941.1"/>
    <property type="molecule type" value="Genomic_DNA"/>
</dbReference>
<dbReference type="EMBL" id="M93600">
    <property type="protein sequence ID" value="AAA23943.1"/>
    <property type="molecule type" value="Genomic_DNA"/>
</dbReference>
<dbReference type="EMBL" id="M93601">
    <property type="protein sequence ID" value="AAA23944.1"/>
    <property type="molecule type" value="Genomic_DNA"/>
</dbReference>
<dbReference type="EMBL" id="M93602">
    <property type="protein sequence ID" value="AAA23945.1"/>
    <property type="molecule type" value="Genomic_DNA"/>
</dbReference>
<dbReference type="EMBL" id="M93603">
    <property type="protein sequence ID" value="AAA23947.1"/>
    <property type="molecule type" value="Genomic_DNA"/>
</dbReference>
<dbReference type="EMBL" id="U00096">
    <property type="protein sequence ID" value="AAC75746.1"/>
    <property type="molecule type" value="Genomic_DNA"/>
</dbReference>
<dbReference type="EMBL" id="AP009048">
    <property type="protein sequence ID" value="BAA16565.2"/>
    <property type="molecule type" value="Genomic_DNA"/>
</dbReference>
<dbReference type="PIR" id="B26725">
    <property type="entry name" value="WQEC3S"/>
</dbReference>
<dbReference type="RefSeq" id="NP_417184.1">
    <property type="nucleotide sequence ID" value="NC_000913.3"/>
</dbReference>
<dbReference type="RefSeq" id="WP_000216194.1">
    <property type="nucleotide sequence ID" value="NZ_LN832404.1"/>
</dbReference>
<dbReference type="SMR" id="P05706"/>
<dbReference type="BioGRID" id="4259356">
    <property type="interactions" value="17"/>
</dbReference>
<dbReference type="ComplexPortal" id="CPX-5969">
    <property type="entry name" value="Glucitol/sorbitol enzyme II complex"/>
</dbReference>
<dbReference type="FunCoup" id="P05706">
    <property type="interactions" value="86"/>
</dbReference>
<dbReference type="IntAct" id="P05706">
    <property type="interactions" value="3"/>
</dbReference>
<dbReference type="STRING" id="511145.b2704"/>
<dbReference type="TCDB" id="4.A.4.1.1">
    <property type="family name" value="the pts glucitol (gut) family"/>
</dbReference>
<dbReference type="jPOST" id="P05706"/>
<dbReference type="PaxDb" id="511145-b2704"/>
<dbReference type="EnsemblBacteria" id="AAC75746">
    <property type="protein sequence ID" value="AAC75746"/>
    <property type="gene ID" value="b2704"/>
</dbReference>
<dbReference type="GeneID" id="948971"/>
<dbReference type="KEGG" id="ecj:JW2673"/>
<dbReference type="KEGG" id="eco:b2704"/>
<dbReference type="KEGG" id="ecoc:C3026_14885"/>
<dbReference type="PATRIC" id="fig|1411691.4.peg.4038"/>
<dbReference type="EchoBASE" id="EB0963"/>
<dbReference type="eggNOG" id="COG3731">
    <property type="taxonomic scope" value="Bacteria"/>
</dbReference>
<dbReference type="HOGENOM" id="CLU_138435_2_1_6"/>
<dbReference type="InParanoid" id="P05706"/>
<dbReference type="OMA" id="MLITFKQ"/>
<dbReference type="OrthoDB" id="5113885at2"/>
<dbReference type="PhylomeDB" id="P05706"/>
<dbReference type="BioCyc" id="EcoCyc:GUTB-MONOMER"/>
<dbReference type="BioCyc" id="MetaCyc:GUTB-MONOMER"/>
<dbReference type="PRO" id="PR:P05706"/>
<dbReference type="Proteomes" id="UP000000625">
    <property type="component" value="Chromosome"/>
</dbReference>
<dbReference type="GO" id="GO:0005737">
    <property type="term" value="C:cytoplasm"/>
    <property type="evidence" value="ECO:0007669"/>
    <property type="project" value="UniProtKB-SubCell"/>
</dbReference>
<dbReference type="GO" id="GO:1902495">
    <property type="term" value="C:transmembrane transporter complex"/>
    <property type="evidence" value="ECO:0000303"/>
    <property type="project" value="ComplexPortal"/>
</dbReference>
<dbReference type="GO" id="GO:0016301">
    <property type="term" value="F:kinase activity"/>
    <property type="evidence" value="ECO:0000315"/>
    <property type="project" value="EcoCyc"/>
</dbReference>
<dbReference type="GO" id="GO:0016773">
    <property type="term" value="F:phosphotransferase activity, alcohol group as acceptor"/>
    <property type="evidence" value="ECO:0000314"/>
    <property type="project" value="UniProtKB"/>
</dbReference>
<dbReference type="GO" id="GO:0008982">
    <property type="term" value="F:protein-N(PI)-phosphohistidine-sugar phosphotransferase activity"/>
    <property type="evidence" value="ECO:0007669"/>
    <property type="project" value="InterPro"/>
</dbReference>
<dbReference type="GO" id="GO:0009401">
    <property type="term" value="P:phosphoenolpyruvate-dependent sugar phosphotransferase system"/>
    <property type="evidence" value="ECO:0000314"/>
    <property type="project" value="UniProtKB"/>
</dbReference>
<dbReference type="GO" id="GO:0015795">
    <property type="term" value="P:sorbitol transmembrane transport"/>
    <property type="evidence" value="ECO:0000303"/>
    <property type="project" value="ComplexPortal"/>
</dbReference>
<dbReference type="FunFam" id="2.40.33.40:FF:000001">
    <property type="entry name" value="PTS system, glucitol/sorbitol-specific, IIA component"/>
    <property type="match status" value="1"/>
</dbReference>
<dbReference type="Gene3D" id="2.40.33.40">
    <property type="entry name" value="Phosphotransferase system, glucitol/sorbitol-specific IIA component"/>
    <property type="match status" value="1"/>
</dbReference>
<dbReference type="InterPro" id="IPR004716">
    <property type="entry name" value="PTS_IIA_glucitol/sorbitol-sp"/>
</dbReference>
<dbReference type="InterPro" id="IPR036665">
    <property type="entry name" value="PTS_IIA_glucitol/sorbitol_sf"/>
</dbReference>
<dbReference type="InterPro" id="IPR018454">
    <property type="entry name" value="PTS_IIA_glucitol/sorbitol_sub"/>
</dbReference>
<dbReference type="NCBIfam" id="TIGR00849">
    <property type="entry name" value="gutA"/>
    <property type="match status" value="1"/>
</dbReference>
<dbReference type="NCBIfam" id="NF007696">
    <property type="entry name" value="PRK10377.1"/>
    <property type="match status" value="1"/>
</dbReference>
<dbReference type="PANTHER" id="PTHR40398">
    <property type="entry name" value="PTS SYSTEM GLUCITOL/SORBITOL-SPECIFIC EIIA COMPONENT"/>
    <property type="match status" value="1"/>
</dbReference>
<dbReference type="PANTHER" id="PTHR40398:SF1">
    <property type="entry name" value="PTS SYSTEM GLUCITOL_SORBITOL-SPECIFIC EIIA COMPONENT"/>
    <property type="match status" value="1"/>
</dbReference>
<dbReference type="Pfam" id="PF03829">
    <property type="entry name" value="PTSIIA_gutA"/>
    <property type="match status" value="1"/>
</dbReference>
<dbReference type="SUPFAM" id="SSF141530">
    <property type="entry name" value="PTSIIA/GutA-like"/>
    <property type="match status" value="1"/>
</dbReference>
<dbReference type="PROSITE" id="PS51097">
    <property type="entry name" value="PTS_EIIA_TYPE_5"/>
    <property type="match status" value="1"/>
</dbReference>
<reference key="1">
    <citation type="journal article" date="1987" name="J. Biol. Chem.">
        <title>Glucitol-specific enzymes of the phosphotransferase system in Escherichia coli. Nucleotide sequence of the gut operon.</title>
        <authorList>
            <person name="Yamada M."/>
            <person name="Saier M.H. Jr."/>
        </authorList>
    </citation>
    <scope>NUCLEOTIDE SEQUENCE [GENOMIC DNA]</scope>
    <scope>SUBCELLULAR LOCATION</scope>
</reference>
<reference key="2">
    <citation type="journal article" date="1992" name="Mol. Biol. Evol.">
        <title>Molecular population genetics of Escherichia coli: DNA sequence diversity at the celC, crr, and gutB loci of natural isolates.</title>
        <authorList>
            <person name="Hall B.G."/>
            <person name="Sharp P.M."/>
        </authorList>
    </citation>
    <scope>NUCLEOTIDE SEQUENCE [GENOMIC DNA]</scope>
    <source>
        <strain>Various ECOR strains</strain>
    </source>
</reference>
<reference key="3">
    <citation type="journal article" date="1997" name="DNA Res.">
        <title>Construction of a contiguous 874-kb sequence of the Escherichia coli-K12 genome corresponding to 50.0-68.8 min on the linkage map and analysis of its sequence features.</title>
        <authorList>
            <person name="Yamamoto Y."/>
            <person name="Aiba H."/>
            <person name="Baba T."/>
            <person name="Hayashi K."/>
            <person name="Inada T."/>
            <person name="Isono K."/>
            <person name="Itoh T."/>
            <person name="Kimura S."/>
            <person name="Kitagawa M."/>
            <person name="Makino K."/>
            <person name="Miki T."/>
            <person name="Mitsuhashi N."/>
            <person name="Mizobuchi K."/>
            <person name="Mori H."/>
            <person name="Nakade S."/>
            <person name="Nakamura Y."/>
            <person name="Nashimoto H."/>
            <person name="Oshima T."/>
            <person name="Oyama S."/>
            <person name="Saito N."/>
            <person name="Sampei G."/>
            <person name="Satoh Y."/>
            <person name="Sivasundaram S."/>
            <person name="Tagami H."/>
            <person name="Takahashi H."/>
            <person name="Takeda J."/>
            <person name="Takemoto K."/>
            <person name="Uehara K."/>
            <person name="Wada C."/>
            <person name="Yamagata S."/>
            <person name="Horiuchi T."/>
        </authorList>
    </citation>
    <scope>NUCLEOTIDE SEQUENCE [LARGE SCALE GENOMIC DNA]</scope>
    <source>
        <strain>K12 / W3110 / ATCC 27325 / DSM 5911</strain>
    </source>
</reference>
<reference key="4">
    <citation type="journal article" date="1997" name="Science">
        <title>The complete genome sequence of Escherichia coli K-12.</title>
        <authorList>
            <person name="Blattner F.R."/>
            <person name="Plunkett G. III"/>
            <person name="Bloch C.A."/>
            <person name="Perna N.T."/>
            <person name="Burland V."/>
            <person name="Riley M."/>
            <person name="Collado-Vides J."/>
            <person name="Glasner J.D."/>
            <person name="Rode C.K."/>
            <person name="Mayhew G.F."/>
            <person name="Gregor J."/>
            <person name="Davis N.W."/>
            <person name="Kirkpatrick H.A."/>
            <person name="Goeden M.A."/>
            <person name="Rose D.J."/>
            <person name="Mau B."/>
            <person name="Shao Y."/>
        </authorList>
    </citation>
    <scope>NUCLEOTIDE SEQUENCE [LARGE SCALE GENOMIC DNA]</scope>
    <source>
        <strain>K12 / MG1655 / ATCC 47076</strain>
    </source>
</reference>
<reference key="5">
    <citation type="journal article" date="2006" name="Mol. Syst. Biol.">
        <title>Highly accurate genome sequences of Escherichia coli K-12 strains MG1655 and W3110.</title>
        <authorList>
            <person name="Hayashi K."/>
            <person name="Morooka N."/>
            <person name="Yamamoto Y."/>
            <person name="Fujita K."/>
            <person name="Isono K."/>
            <person name="Choi S."/>
            <person name="Ohtsubo E."/>
            <person name="Baba T."/>
            <person name="Wanner B.L."/>
            <person name="Mori H."/>
            <person name="Horiuchi T."/>
        </authorList>
    </citation>
    <scope>NUCLEOTIDE SEQUENCE [LARGE SCALE GENOMIC DNA]</scope>
    <scope>SEQUENCE REVISION TO 122</scope>
    <source>
        <strain>K12 / W3110 / ATCC 27325 / DSM 5911</strain>
    </source>
</reference>
<reference key="6">
    <citation type="journal article" date="1975" name="J. Bacteriol.">
        <title>Nature and properties of hexitol transport systems in Escherichia coli.</title>
        <authorList>
            <person name="Lengeler J."/>
        </authorList>
    </citation>
    <scope>FUNCTION</scope>
    <scope>CATALYTIC ACTIVITY</scope>
    <scope>SUBSTRATE SPECIFICITY</scope>
</reference>
<reference key="7">
    <citation type="journal article" date="1988" name="J. Mol. Biol.">
        <title>Positive and negative regulators for glucitol (gut) operon expression in Escherichia coli.</title>
        <authorList>
            <person name="Yamada M."/>
            <person name="Saier M.H. Jr."/>
        </authorList>
    </citation>
    <scope>INDUCTION</scope>
</reference>
<protein>
    <recommendedName>
        <fullName evidence="4">PTS system glucitol/sorbitol-specific EIIA component</fullName>
    </recommendedName>
    <alternativeName>
        <fullName evidence="4">EIIA-Gut</fullName>
    </alternativeName>
    <alternativeName>
        <fullName evidence="4">EIII-Gut</fullName>
    </alternativeName>
    <alternativeName>
        <fullName evidence="4">Glucitol/sorbitol-specific phosphotransferase enzyme IIA component</fullName>
    </alternativeName>
</protein>